<keyword id="KW-0150">Chloroplast</keyword>
<keyword id="KW-0934">Plastid</keyword>
<keyword id="KW-0687">Ribonucleoprotein</keyword>
<keyword id="KW-0689">Ribosomal protein</keyword>
<gene>
    <name type="primary">rpl32</name>
    <name type="ORF">PA166</name>
</gene>
<feature type="initiator methionine" description="Removed" evidence="1">
    <location>
        <position position="1"/>
    </location>
</feature>
<feature type="chain" id="PRO_0000172470" description="Large ribosomal subunit protein bL32c">
    <location>
        <begin position="2"/>
        <end position="63"/>
    </location>
</feature>
<feature type="region of interest" description="Disordered" evidence="2">
    <location>
        <begin position="38"/>
        <end position="63"/>
    </location>
</feature>
<feature type="compositionally biased region" description="Polar residues" evidence="2">
    <location>
        <begin position="53"/>
        <end position="63"/>
    </location>
</feature>
<protein>
    <recommendedName>
        <fullName evidence="3">Large ribosomal subunit protein bL32c</fullName>
    </recommendedName>
    <alternativeName>
        <fullName>50S ribosomal protein L32, chloroplastic</fullName>
    </alternativeName>
</protein>
<proteinExistence type="inferred from homology"/>
<organism>
    <name type="scientific">Oryza sativa</name>
    <name type="common">Rice</name>
    <dbReference type="NCBI Taxonomy" id="4530"/>
    <lineage>
        <taxon>Eukaryota</taxon>
        <taxon>Viridiplantae</taxon>
        <taxon>Streptophyta</taxon>
        <taxon>Embryophyta</taxon>
        <taxon>Tracheophyta</taxon>
        <taxon>Spermatophyta</taxon>
        <taxon>Magnoliopsida</taxon>
        <taxon>Liliopsida</taxon>
        <taxon>Poales</taxon>
        <taxon>Poaceae</taxon>
        <taxon>BOP clade</taxon>
        <taxon>Oryzoideae</taxon>
        <taxon>Oryzeae</taxon>
        <taxon>Oryzinae</taxon>
        <taxon>Oryza</taxon>
    </lineage>
</organism>
<evidence type="ECO:0000250" key="1"/>
<evidence type="ECO:0000256" key="2">
    <source>
        <dbReference type="SAM" id="MobiDB-lite"/>
    </source>
</evidence>
<evidence type="ECO:0000305" key="3"/>
<accession>P0C452</accession>
<accession>P12197</accession>
<accession>Q6QXR3</accession>
<accession>Q6QY39</accession>
<reference key="1">
    <citation type="journal article" date="2004" name="Plant Physiol.">
        <title>A comparison of rice chloroplast genomes.</title>
        <authorList>
            <person name="Tang J."/>
            <person name="Xia H."/>
            <person name="Cao M."/>
            <person name="Zhang X."/>
            <person name="Zeng W."/>
            <person name="Hu S."/>
            <person name="Tong W."/>
            <person name="Wang J."/>
            <person name="Wang J."/>
            <person name="Yu J."/>
            <person name="Yang H."/>
            <person name="Zhu L."/>
        </authorList>
    </citation>
    <scope>NUCLEOTIDE SEQUENCE [LARGE SCALE GENOMIC DNA]</scope>
    <source>
        <strain>cv. PA64s</strain>
    </source>
</reference>
<sequence length="63" mass="7316">MAVPKKRTSMSKKRIRKNLWKKKTYFSIVQSYSLAKSRSFSGVSEHPKPKGFSRQQTNNRVLG</sequence>
<comment type="subcellular location">
    <subcellularLocation>
        <location>Plastid</location>
        <location>Chloroplast</location>
    </subcellularLocation>
</comment>
<comment type="similarity">
    <text evidence="3">Belongs to the bacterial ribosomal protein bL32 family.</text>
</comment>
<dbReference type="EMBL" id="AY522331">
    <property type="protein sequence ID" value="AAS46218.1"/>
    <property type="molecule type" value="Genomic_DNA"/>
</dbReference>
<dbReference type="RefSeq" id="NP_039442.1">
    <property type="nucleotide sequence ID" value="NC_001320.1"/>
</dbReference>
<dbReference type="SMR" id="P0C452"/>
<dbReference type="GeneID" id="3131486"/>
<dbReference type="KEGG" id="osa:3131486"/>
<dbReference type="GO" id="GO:0009507">
    <property type="term" value="C:chloroplast"/>
    <property type="evidence" value="ECO:0007669"/>
    <property type="project" value="UniProtKB-SubCell"/>
</dbReference>
<dbReference type="GO" id="GO:0015934">
    <property type="term" value="C:large ribosomal subunit"/>
    <property type="evidence" value="ECO:0007669"/>
    <property type="project" value="InterPro"/>
</dbReference>
<dbReference type="GO" id="GO:0009536">
    <property type="term" value="C:plastid"/>
    <property type="evidence" value="ECO:0000305"/>
    <property type="project" value="Gramene"/>
</dbReference>
<dbReference type="GO" id="GO:0003735">
    <property type="term" value="F:structural constituent of ribosome"/>
    <property type="evidence" value="ECO:0007669"/>
    <property type="project" value="InterPro"/>
</dbReference>
<dbReference type="GO" id="GO:0006412">
    <property type="term" value="P:translation"/>
    <property type="evidence" value="ECO:0007669"/>
    <property type="project" value="UniProtKB-UniRule"/>
</dbReference>
<dbReference type="HAMAP" id="MF_00340">
    <property type="entry name" value="Ribosomal_bL32"/>
    <property type="match status" value="1"/>
</dbReference>
<dbReference type="InterPro" id="IPR002677">
    <property type="entry name" value="Ribosomal_bL32"/>
</dbReference>
<dbReference type="InterPro" id="IPR044958">
    <property type="entry name" value="Ribosomal_bL32_plant/cyanobact"/>
</dbReference>
<dbReference type="InterPro" id="IPR011332">
    <property type="entry name" value="Ribosomal_zn-bd"/>
</dbReference>
<dbReference type="PANTHER" id="PTHR36083">
    <property type="entry name" value="50S RIBOSOMAL PROTEIN L32, CHLOROPLASTIC"/>
    <property type="match status" value="1"/>
</dbReference>
<dbReference type="PANTHER" id="PTHR36083:SF1">
    <property type="entry name" value="LARGE RIBOSOMAL SUBUNIT PROTEIN BL32C"/>
    <property type="match status" value="1"/>
</dbReference>
<dbReference type="Pfam" id="PF01783">
    <property type="entry name" value="Ribosomal_L32p"/>
    <property type="match status" value="1"/>
</dbReference>
<dbReference type="SUPFAM" id="SSF57829">
    <property type="entry name" value="Zn-binding ribosomal proteins"/>
    <property type="match status" value="1"/>
</dbReference>
<geneLocation type="chloroplast"/>
<name>RK32_ORYSA</name>